<sequence>MRHYEIVFMVHPDQSEQVPCMIERYSAAITGAEGKIHRLEDWGRRQLAYPINKLHKAHYVLMNVEAPQEVIDELETTFRFNDAVIRSMVMRTKHAVTEASPMVKAKDERRERRDDFANETADDAEAGDSEE</sequence>
<gene>
    <name evidence="1" type="primary">rpsF</name>
    <name type="ordered locus">SeD_A4787</name>
</gene>
<name>RS6_SALDC</name>
<accession>B5FSA1</accession>
<proteinExistence type="inferred from homology"/>
<protein>
    <recommendedName>
        <fullName evidence="1">Small ribosomal subunit protein bS6</fullName>
    </recommendedName>
    <alternativeName>
        <fullName evidence="3">30S ribosomal protein S6</fullName>
    </alternativeName>
</protein>
<organism>
    <name type="scientific">Salmonella dublin (strain CT_02021853)</name>
    <dbReference type="NCBI Taxonomy" id="439851"/>
    <lineage>
        <taxon>Bacteria</taxon>
        <taxon>Pseudomonadati</taxon>
        <taxon>Pseudomonadota</taxon>
        <taxon>Gammaproteobacteria</taxon>
        <taxon>Enterobacterales</taxon>
        <taxon>Enterobacteriaceae</taxon>
        <taxon>Salmonella</taxon>
    </lineage>
</organism>
<feature type="chain" id="PRO_1000120797" description="Small ribosomal subunit protein bS6">
    <location>
        <begin position="1"/>
        <end position="131"/>
    </location>
</feature>
<feature type="region of interest" description="Disordered" evidence="2">
    <location>
        <begin position="98"/>
        <end position="131"/>
    </location>
</feature>
<feature type="compositionally biased region" description="Basic and acidic residues" evidence="2">
    <location>
        <begin position="104"/>
        <end position="116"/>
    </location>
</feature>
<feature type="compositionally biased region" description="Acidic residues" evidence="2">
    <location>
        <begin position="120"/>
        <end position="131"/>
    </location>
</feature>
<dbReference type="EMBL" id="CP001144">
    <property type="protein sequence ID" value="ACH75835.1"/>
    <property type="molecule type" value="Genomic_DNA"/>
</dbReference>
<dbReference type="RefSeq" id="WP_001216671.1">
    <property type="nucleotide sequence ID" value="NC_011205.1"/>
</dbReference>
<dbReference type="SMR" id="B5FSA1"/>
<dbReference type="KEGG" id="sed:SeD_A4787"/>
<dbReference type="HOGENOM" id="CLU_113441_6_1_6"/>
<dbReference type="Proteomes" id="UP000008322">
    <property type="component" value="Chromosome"/>
</dbReference>
<dbReference type="GO" id="GO:0022627">
    <property type="term" value="C:cytosolic small ribosomal subunit"/>
    <property type="evidence" value="ECO:0007669"/>
    <property type="project" value="TreeGrafter"/>
</dbReference>
<dbReference type="GO" id="GO:0070181">
    <property type="term" value="F:small ribosomal subunit rRNA binding"/>
    <property type="evidence" value="ECO:0007669"/>
    <property type="project" value="TreeGrafter"/>
</dbReference>
<dbReference type="GO" id="GO:0003735">
    <property type="term" value="F:structural constituent of ribosome"/>
    <property type="evidence" value="ECO:0007669"/>
    <property type="project" value="InterPro"/>
</dbReference>
<dbReference type="GO" id="GO:0006412">
    <property type="term" value="P:translation"/>
    <property type="evidence" value="ECO:0007669"/>
    <property type="project" value="UniProtKB-UniRule"/>
</dbReference>
<dbReference type="CDD" id="cd00473">
    <property type="entry name" value="bS6"/>
    <property type="match status" value="1"/>
</dbReference>
<dbReference type="FunFam" id="3.30.70.60:FF:000003">
    <property type="entry name" value="30S ribosomal protein S6"/>
    <property type="match status" value="1"/>
</dbReference>
<dbReference type="Gene3D" id="3.30.70.60">
    <property type="match status" value="1"/>
</dbReference>
<dbReference type="HAMAP" id="MF_00360">
    <property type="entry name" value="Ribosomal_bS6"/>
    <property type="match status" value="1"/>
</dbReference>
<dbReference type="InterPro" id="IPR000529">
    <property type="entry name" value="Ribosomal_bS6"/>
</dbReference>
<dbReference type="InterPro" id="IPR020815">
    <property type="entry name" value="Ribosomal_bS6_CS"/>
</dbReference>
<dbReference type="InterPro" id="IPR035980">
    <property type="entry name" value="Ribosomal_bS6_sf"/>
</dbReference>
<dbReference type="InterPro" id="IPR020814">
    <property type="entry name" value="Ribosomal_S6_plastid/chlpt"/>
</dbReference>
<dbReference type="InterPro" id="IPR014717">
    <property type="entry name" value="Transl_elong_EF1B/ribsomal_bS6"/>
</dbReference>
<dbReference type="NCBIfam" id="TIGR00166">
    <property type="entry name" value="S6"/>
    <property type="match status" value="1"/>
</dbReference>
<dbReference type="PANTHER" id="PTHR21011">
    <property type="entry name" value="MITOCHONDRIAL 28S RIBOSOMAL PROTEIN S6"/>
    <property type="match status" value="1"/>
</dbReference>
<dbReference type="PANTHER" id="PTHR21011:SF1">
    <property type="entry name" value="SMALL RIBOSOMAL SUBUNIT PROTEIN BS6M"/>
    <property type="match status" value="1"/>
</dbReference>
<dbReference type="Pfam" id="PF01250">
    <property type="entry name" value="Ribosomal_S6"/>
    <property type="match status" value="1"/>
</dbReference>
<dbReference type="SUPFAM" id="SSF54995">
    <property type="entry name" value="Ribosomal protein S6"/>
    <property type="match status" value="1"/>
</dbReference>
<dbReference type="PROSITE" id="PS01048">
    <property type="entry name" value="RIBOSOMAL_S6"/>
    <property type="match status" value="1"/>
</dbReference>
<reference key="1">
    <citation type="journal article" date="2011" name="J. Bacteriol.">
        <title>Comparative genomics of 28 Salmonella enterica isolates: evidence for CRISPR-mediated adaptive sublineage evolution.</title>
        <authorList>
            <person name="Fricke W.F."/>
            <person name="Mammel M.K."/>
            <person name="McDermott P.F."/>
            <person name="Tartera C."/>
            <person name="White D.G."/>
            <person name="Leclerc J.E."/>
            <person name="Ravel J."/>
            <person name="Cebula T.A."/>
        </authorList>
    </citation>
    <scope>NUCLEOTIDE SEQUENCE [LARGE SCALE GENOMIC DNA]</scope>
    <source>
        <strain>CT_02021853</strain>
    </source>
</reference>
<evidence type="ECO:0000255" key="1">
    <source>
        <dbReference type="HAMAP-Rule" id="MF_00360"/>
    </source>
</evidence>
<evidence type="ECO:0000256" key="2">
    <source>
        <dbReference type="SAM" id="MobiDB-lite"/>
    </source>
</evidence>
<evidence type="ECO:0000305" key="3"/>
<keyword id="KW-0687">Ribonucleoprotein</keyword>
<keyword id="KW-0689">Ribosomal protein</keyword>
<keyword id="KW-0694">RNA-binding</keyword>
<keyword id="KW-0699">rRNA-binding</keyword>
<comment type="function">
    <text evidence="1">Binds together with bS18 to 16S ribosomal RNA.</text>
</comment>
<comment type="similarity">
    <text evidence="1">Belongs to the bacterial ribosomal protein bS6 family.</text>
</comment>